<comment type="function">
    <text evidence="1">Channel that opens in response to stretch forces in the membrane lipid bilayer. May participate in the regulation of osmotic pressure changes within the cell.</text>
</comment>
<comment type="subunit">
    <text evidence="1">Homopentamer.</text>
</comment>
<comment type="subcellular location">
    <subcellularLocation>
        <location evidence="1">Cell inner membrane</location>
        <topology evidence="1">Multi-pass membrane protein</topology>
    </subcellularLocation>
</comment>
<comment type="similarity">
    <text evidence="1">Belongs to the MscL family.</text>
</comment>
<accession>B6I204</accession>
<feature type="chain" id="PRO_1000094893" description="Large-conductance mechanosensitive channel">
    <location>
        <begin position="1"/>
        <end position="136"/>
    </location>
</feature>
<feature type="transmembrane region" description="Helical" evidence="1">
    <location>
        <begin position="10"/>
        <end position="30"/>
    </location>
</feature>
<feature type="transmembrane region" description="Helical" evidence="1">
    <location>
        <begin position="76"/>
        <end position="96"/>
    </location>
</feature>
<organism>
    <name type="scientific">Escherichia coli (strain SE11)</name>
    <dbReference type="NCBI Taxonomy" id="409438"/>
    <lineage>
        <taxon>Bacteria</taxon>
        <taxon>Pseudomonadati</taxon>
        <taxon>Pseudomonadota</taxon>
        <taxon>Gammaproteobacteria</taxon>
        <taxon>Enterobacterales</taxon>
        <taxon>Enterobacteriaceae</taxon>
        <taxon>Escherichia</taxon>
    </lineage>
</organism>
<dbReference type="EMBL" id="AP009240">
    <property type="protein sequence ID" value="BAG79089.1"/>
    <property type="molecule type" value="Genomic_DNA"/>
</dbReference>
<dbReference type="RefSeq" id="WP_000022442.1">
    <property type="nucleotide sequence ID" value="NC_011415.1"/>
</dbReference>
<dbReference type="SMR" id="B6I204"/>
<dbReference type="GeneID" id="75173461"/>
<dbReference type="KEGG" id="ecy:ECSE_3565"/>
<dbReference type="HOGENOM" id="CLU_095787_0_0_6"/>
<dbReference type="Proteomes" id="UP000008199">
    <property type="component" value="Chromosome"/>
</dbReference>
<dbReference type="GO" id="GO:0005886">
    <property type="term" value="C:plasma membrane"/>
    <property type="evidence" value="ECO:0007669"/>
    <property type="project" value="UniProtKB-SubCell"/>
</dbReference>
<dbReference type="GO" id="GO:0008381">
    <property type="term" value="F:mechanosensitive monoatomic ion channel activity"/>
    <property type="evidence" value="ECO:0007669"/>
    <property type="project" value="UniProtKB-UniRule"/>
</dbReference>
<dbReference type="FunFam" id="1.10.1200.120:FF:000001">
    <property type="entry name" value="Large-conductance mechanosensitive channel"/>
    <property type="match status" value="1"/>
</dbReference>
<dbReference type="Gene3D" id="1.10.1200.120">
    <property type="entry name" value="Large-conductance mechanosensitive channel, MscL, domain 1"/>
    <property type="match status" value="1"/>
</dbReference>
<dbReference type="HAMAP" id="MF_00115">
    <property type="entry name" value="MscL"/>
    <property type="match status" value="1"/>
</dbReference>
<dbReference type="InterPro" id="IPR019823">
    <property type="entry name" value="Mechanosensitive_channel_CS"/>
</dbReference>
<dbReference type="InterPro" id="IPR001185">
    <property type="entry name" value="MS_channel"/>
</dbReference>
<dbReference type="InterPro" id="IPR037673">
    <property type="entry name" value="MSC/AndL"/>
</dbReference>
<dbReference type="InterPro" id="IPR036019">
    <property type="entry name" value="MscL_channel"/>
</dbReference>
<dbReference type="NCBIfam" id="TIGR00220">
    <property type="entry name" value="mscL"/>
    <property type="match status" value="1"/>
</dbReference>
<dbReference type="NCBIfam" id="NF001841">
    <property type="entry name" value="PRK00567.1-1"/>
    <property type="match status" value="1"/>
</dbReference>
<dbReference type="NCBIfam" id="NF001843">
    <property type="entry name" value="PRK00567.1-4"/>
    <property type="match status" value="1"/>
</dbReference>
<dbReference type="PANTHER" id="PTHR30266:SF2">
    <property type="entry name" value="LARGE-CONDUCTANCE MECHANOSENSITIVE CHANNEL"/>
    <property type="match status" value="1"/>
</dbReference>
<dbReference type="PANTHER" id="PTHR30266">
    <property type="entry name" value="MECHANOSENSITIVE CHANNEL MSCL"/>
    <property type="match status" value="1"/>
</dbReference>
<dbReference type="Pfam" id="PF01741">
    <property type="entry name" value="MscL"/>
    <property type="match status" value="1"/>
</dbReference>
<dbReference type="PRINTS" id="PR01264">
    <property type="entry name" value="MECHCHANNEL"/>
</dbReference>
<dbReference type="SUPFAM" id="SSF81330">
    <property type="entry name" value="Gated mechanosensitive channel"/>
    <property type="match status" value="1"/>
</dbReference>
<dbReference type="PROSITE" id="PS01327">
    <property type="entry name" value="MSCL"/>
    <property type="match status" value="1"/>
</dbReference>
<keyword id="KW-0997">Cell inner membrane</keyword>
<keyword id="KW-1003">Cell membrane</keyword>
<keyword id="KW-0407">Ion channel</keyword>
<keyword id="KW-0406">Ion transport</keyword>
<keyword id="KW-0472">Membrane</keyword>
<keyword id="KW-0812">Transmembrane</keyword>
<keyword id="KW-1133">Transmembrane helix</keyword>
<keyword id="KW-0813">Transport</keyword>
<gene>
    <name evidence="1" type="primary">mscL</name>
    <name type="ordered locus">ECSE_3565</name>
</gene>
<reference key="1">
    <citation type="journal article" date="2008" name="DNA Res.">
        <title>Complete genome sequence and comparative analysis of the wild-type commensal Escherichia coli strain SE11 isolated from a healthy adult.</title>
        <authorList>
            <person name="Oshima K."/>
            <person name="Toh H."/>
            <person name="Ogura Y."/>
            <person name="Sasamoto H."/>
            <person name="Morita H."/>
            <person name="Park S.-H."/>
            <person name="Ooka T."/>
            <person name="Iyoda S."/>
            <person name="Taylor T.D."/>
            <person name="Hayashi T."/>
            <person name="Itoh K."/>
            <person name="Hattori M."/>
        </authorList>
    </citation>
    <scope>NUCLEOTIDE SEQUENCE [LARGE SCALE GENOMIC DNA]</scope>
    <source>
        <strain>SE11</strain>
    </source>
</reference>
<protein>
    <recommendedName>
        <fullName evidence="1">Large-conductance mechanosensitive channel</fullName>
    </recommendedName>
</protein>
<name>MSCL_ECOSE</name>
<sequence length="136" mass="14957">MSIIKEFREFAMRGNVVDLAVGVIIGAAFGKIVSSLVADIIMPPLGLLIGGIDFKQFAVTLRDAQGDIPAVVMHYGVFIQNVFDFLIVAFAIFMAIKLINKLNRKKEEPAAAPAPTKEEVLLTEIRDLLKEQNNRS</sequence>
<proteinExistence type="inferred from homology"/>
<evidence type="ECO:0000255" key="1">
    <source>
        <dbReference type="HAMAP-Rule" id="MF_00115"/>
    </source>
</evidence>